<sequence length="908" mass="102912">MYNNNNDGGGGGSANGNTMQQRRKTTTRSRSKQQQQQQCTSENVIEKNQTNGAQNERLHFRGSSKDSALSTPLLPRSRSTTSAINSPSPLCCNGGLSILNCCRDVNCHLNAPLRGSVESSRSRRSESRQSSLTATPTTTPKQASPSPTISERSRSCSGSRSRSCSCDGRLVDCHKHSAAAAAASTAAPQFTVNLSIDLFSWTLFLLAFCTRFYKLATPPHIVFDELHYGKYIAHYMRNIFFFDQHPPLGKQLIAGLVSLAGYDGNYTFSRIGAAYAPDVPIFWFRFIPALCGSLLAPAVYRLLLEARLHRWAAALGGLLVVLDNSLLTQSRFVLMESMLLLASTLGIACLLRFQRCRLGSFQWLCNGSAAGVLLACAGAVKYIGFLALALAGYLLCRHLWQLLYDASLTNRQLWMHALSRLLLFVGIPIAVYIGVFYVHFRTLHRAGPHDSIMTSAFQASLEGGLASITSGQPLAVVHGSQITLRHTHGRTCWLHSHAAVYPVRYKDKRGSSHQQQVTCYSFKDVNNWWIVKRPERDDLVVGEQPDVIQHGDVIQLVHGITSRALNSHDVAAPMTPQCQEVSCYIDYEIKMAGELLWRVEILNRNSEGDSWHAIKSEIRLVHESTGAALKFSGRQLPDWGFNQHEVVADRDQVHEDAIWNVEEHRYTKTQDQRERERQLLSAEMIPTKRTKLSFWAKLLELQTKMFWHGKHLQAHMYSSLPHEWPLMDKGIAYWLDSQSSAQIYLLGNVLIWYTASAGILVYATLLAFYAVRRRRLCFDVSQHEWQRFLMAGDTFFVGYMMHYLPYYFVDRTLFLHNYLPAFVFKLLLLCFVVEHLDYLLRRHCSGRGVHLVRVYRLALLLWLLAVGSVFVKFLPLSYGARKMTIEEVRRLRWKDTWDFILQKNYALN</sequence>
<accession>Q2LZ62</accession>
<reference key="1">
    <citation type="journal article" date="2005" name="Genome Res.">
        <title>Comparative genome sequencing of Drosophila pseudoobscura: chromosomal, gene, and cis-element evolution.</title>
        <authorList>
            <person name="Richards S."/>
            <person name="Liu Y."/>
            <person name="Bettencourt B.R."/>
            <person name="Hradecky P."/>
            <person name="Letovsky S."/>
            <person name="Nielsen R."/>
            <person name="Thornton K."/>
            <person name="Hubisz M.J."/>
            <person name="Chen R."/>
            <person name="Meisel R.P."/>
            <person name="Couronne O."/>
            <person name="Hua S."/>
            <person name="Smith M.A."/>
            <person name="Zhang P."/>
            <person name="Liu J."/>
            <person name="Bussemaker H.J."/>
            <person name="van Batenburg M.F."/>
            <person name="Howells S.L."/>
            <person name="Scherer S.E."/>
            <person name="Sodergren E."/>
            <person name="Matthews B.B."/>
            <person name="Crosby M.A."/>
            <person name="Schroeder A.J."/>
            <person name="Ortiz-Barrientos D."/>
            <person name="Rives C.M."/>
            <person name="Metzker M.L."/>
            <person name="Muzny D.M."/>
            <person name="Scott G."/>
            <person name="Steffen D."/>
            <person name="Wheeler D.A."/>
            <person name="Worley K.C."/>
            <person name="Havlak P."/>
            <person name="Durbin K.J."/>
            <person name="Egan A."/>
            <person name="Gill R."/>
            <person name="Hume J."/>
            <person name="Morgan M.B."/>
            <person name="Miner G."/>
            <person name="Hamilton C."/>
            <person name="Huang Y."/>
            <person name="Waldron L."/>
            <person name="Verduzco D."/>
            <person name="Clerc-Blankenburg K.P."/>
            <person name="Dubchak I."/>
            <person name="Noor M.A.F."/>
            <person name="Anderson W."/>
            <person name="White K.P."/>
            <person name="Clark A.G."/>
            <person name="Schaeffer S.W."/>
            <person name="Gelbart W.M."/>
            <person name="Weinstock G.M."/>
            <person name="Gibbs R.A."/>
        </authorList>
    </citation>
    <scope>NUCLEOTIDE SEQUENCE [LARGE SCALE GENOMIC DNA]</scope>
    <source>
        <strain>MV2-25 / Tucson 14011-0121.94</strain>
    </source>
</reference>
<protein>
    <recommendedName>
        <fullName>Protein O-mannosyltransferase 1</fullName>
        <ecNumber>2.4.1.109</ecNumber>
    </recommendedName>
    <alternativeName>
        <fullName>Dolichyl-phosphate-mannose--protein mannosyltransferase 1</fullName>
    </alternativeName>
    <alternativeName>
        <fullName>Protein rotated abdomen</fullName>
    </alternativeName>
</protein>
<keyword id="KW-0217">Developmental protein</keyword>
<keyword id="KW-0256">Endoplasmic reticulum</keyword>
<keyword id="KW-0325">Glycoprotein</keyword>
<keyword id="KW-0328">Glycosyltransferase</keyword>
<keyword id="KW-0472">Membrane</keyword>
<keyword id="KW-1185">Reference proteome</keyword>
<keyword id="KW-0677">Repeat</keyword>
<keyword id="KW-0808">Transferase</keyword>
<keyword id="KW-0812">Transmembrane</keyword>
<keyword id="KW-1133">Transmembrane helix</keyword>
<gene>
    <name evidence="2" type="primary">rt</name>
    <name type="ORF">GA19350</name>
</gene>
<dbReference type="EC" id="2.4.1.109"/>
<dbReference type="EMBL" id="CH379069">
    <property type="protein sequence ID" value="EAL29647.2"/>
    <property type="molecule type" value="Genomic_DNA"/>
</dbReference>
<dbReference type="RefSeq" id="XP_001353911.2">
    <property type="nucleotide sequence ID" value="XM_001353875.3"/>
</dbReference>
<dbReference type="SMR" id="Q2LZ62"/>
<dbReference type="FunCoup" id="Q2LZ62">
    <property type="interactions" value="397"/>
</dbReference>
<dbReference type="STRING" id="46245.Q2LZ62"/>
<dbReference type="GlyCosmos" id="Q2LZ62">
    <property type="glycosylation" value="1 site, No reported glycans"/>
</dbReference>
<dbReference type="EnsemblMetazoa" id="FBtr0276971">
    <property type="protein sequence ID" value="FBpp0275409"/>
    <property type="gene ID" value="FBgn0079347"/>
</dbReference>
<dbReference type="GeneID" id="4813592"/>
<dbReference type="KEGG" id="dpo:4813592"/>
<dbReference type="CTD" id="39297"/>
<dbReference type="eggNOG" id="KOG3359">
    <property type="taxonomic scope" value="Eukaryota"/>
</dbReference>
<dbReference type="HOGENOM" id="CLU_008438_1_0_1"/>
<dbReference type="InParanoid" id="Q2LZ62"/>
<dbReference type="OMA" id="NCHLNAP"/>
<dbReference type="UniPathway" id="UPA00378"/>
<dbReference type="ChiTaRS" id="rt">
    <property type="organism name" value="fly"/>
</dbReference>
<dbReference type="Proteomes" id="UP000001819">
    <property type="component" value="Chromosome X"/>
</dbReference>
<dbReference type="Bgee" id="FBgn0079347">
    <property type="expression patterns" value="Expressed in female reproductive system and 1 other cell type or tissue"/>
</dbReference>
<dbReference type="GO" id="GO:0005783">
    <property type="term" value="C:endoplasmic reticulum"/>
    <property type="evidence" value="ECO:0000250"/>
    <property type="project" value="UniProtKB"/>
</dbReference>
<dbReference type="GO" id="GO:0005789">
    <property type="term" value="C:endoplasmic reticulum membrane"/>
    <property type="evidence" value="ECO:0007669"/>
    <property type="project" value="UniProtKB-SubCell"/>
</dbReference>
<dbReference type="GO" id="GO:0004169">
    <property type="term" value="F:dolichyl-phosphate-mannose-protein mannosyltransferase activity"/>
    <property type="evidence" value="ECO:0000250"/>
    <property type="project" value="UniProtKB"/>
</dbReference>
<dbReference type="GO" id="GO:0007517">
    <property type="term" value="P:muscle organ development"/>
    <property type="evidence" value="ECO:0000250"/>
    <property type="project" value="UniProtKB"/>
</dbReference>
<dbReference type="GO" id="GO:0007385">
    <property type="term" value="P:specification of segmental identity, abdomen"/>
    <property type="evidence" value="ECO:0000250"/>
    <property type="project" value="UniProtKB"/>
</dbReference>
<dbReference type="CDD" id="cd23281">
    <property type="entry name" value="beta-trefoil_MIR_POMT1"/>
    <property type="match status" value="1"/>
</dbReference>
<dbReference type="FunFam" id="2.80.10.50:FF:000012">
    <property type="entry name" value="Protein O-mannosyl-transferase 1"/>
    <property type="match status" value="1"/>
</dbReference>
<dbReference type="Gene3D" id="2.80.10.50">
    <property type="match status" value="1"/>
</dbReference>
<dbReference type="InterPro" id="IPR027005">
    <property type="entry name" value="GlyclTrfase_39-like"/>
</dbReference>
<dbReference type="InterPro" id="IPR003342">
    <property type="entry name" value="Glyco_trans_39/83"/>
</dbReference>
<dbReference type="InterPro" id="IPR036300">
    <property type="entry name" value="MIR_dom_sf"/>
</dbReference>
<dbReference type="InterPro" id="IPR016093">
    <property type="entry name" value="MIR_motif"/>
</dbReference>
<dbReference type="InterPro" id="IPR032421">
    <property type="entry name" value="PMT_4TMC"/>
</dbReference>
<dbReference type="PANTHER" id="PTHR10050">
    <property type="entry name" value="DOLICHYL-PHOSPHATE-MANNOSE--PROTEIN MANNOSYLTRANSFERASE"/>
    <property type="match status" value="1"/>
</dbReference>
<dbReference type="PANTHER" id="PTHR10050:SF51">
    <property type="entry name" value="PROTEIN O-MANNOSYL-TRANSFERASE 1"/>
    <property type="match status" value="1"/>
</dbReference>
<dbReference type="Pfam" id="PF02815">
    <property type="entry name" value="MIR"/>
    <property type="match status" value="1"/>
</dbReference>
<dbReference type="Pfam" id="PF02366">
    <property type="entry name" value="PMT"/>
    <property type="match status" value="1"/>
</dbReference>
<dbReference type="Pfam" id="PF16192">
    <property type="entry name" value="PMT_4TMC"/>
    <property type="match status" value="1"/>
</dbReference>
<dbReference type="SMART" id="SM00472">
    <property type="entry name" value="MIR"/>
    <property type="match status" value="3"/>
</dbReference>
<dbReference type="SUPFAM" id="SSF82109">
    <property type="entry name" value="MIR domain"/>
    <property type="match status" value="1"/>
</dbReference>
<dbReference type="PROSITE" id="PS50919">
    <property type="entry name" value="MIR"/>
    <property type="match status" value="3"/>
</dbReference>
<feature type="chain" id="PRO_0000307926" description="Protein O-mannosyltransferase 1">
    <location>
        <begin position="1"/>
        <end position="908"/>
    </location>
</feature>
<feature type="transmembrane region" description="Helical" evidence="3">
    <location>
        <begin position="190"/>
        <end position="210"/>
    </location>
</feature>
<feature type="transmembrane region" description="Helical" evidence="3">
    <location>
        <begin position="279"/>
        <end position="299"/>
    </location>
</feature>
<feature type="transmembrane region" description="Helical" evidence="3">
    <location>
        <begin position="311"/>
        <end position="328"/>
    </location>
</feature>
<feature type="transmembrane region" description="Helical" evidence="3">
    <location>
        <begin position="331"/>
        <end position="351"/>
    </location>
</feature>
<feature type="transmembrane region" description="Helical" evidence="3">
    <location>
        <begin position="370"/>
        <end position="390"/>
    </location>
</feature>
<feature type="transmembrane region" description="Helical" evidence="3">
    <location>
        <begin position="418"/>
        <end position="438"/>
    </location>
</feature>
<feature type="transmembrane region" description="Helical" evidence="3">
    <location>
        <begin position="749"/>
        <end position="769"/>
    </location>
</feature>
<feature type="transmembrane region" description="Helical" evidence="3">
    <location>
        <begin position="788"/>
        <end position="808"/>
    </location>
</feature>
<feature type="transmembrane region" description="Helical" evidence="3">
    <location>
        <begin position="813"/>
        <end position="833"/>
    </location>
</feature>
<feature type="transmembrane region" description="Helical" evidence="3">
    <location>
        <begin position="857"/>
        <end position="877"/>
    </location>
</feature>
<feature type="domain" description="MIR 1" evidence="4">
    <location>
        <begin position="473"/>
        <end position="534"/>
    </location>
</feature>
<feature type="domain" description="MIR 2" evidence="4">
    <location>
        <begin position="545"/>
        <end position="602"/>
    </location>
</feature>
<feature type="domain" description="MIR 3" evidence="4">
    <location>
        <begin position="608"/>
        <end position="664"/>
    </location>
</feature>
<feature type="region of interest" description="Disordered" evidence="5">
    <location>
        <begin position="1"/>
        <end position="85"/>
    </location>
</feature>
<feature type="region of interest" description="Disordered" evidence="5">
    <location>
        <begin position="115"/>
        <end position="160"/>
    </location>
</feature>
<feature type="compositionally biased region" description="Basic residues" evidence="5">
    <location>
        <begin position="21"/>
        <end position="31"/>
    </location>
</feature>
<feature type="compositionally biased region" description="Polar residues" evidence="5">
    <location>
        <begin position="39"/>
        <end position="54"/>
    </location>
</feature>
<feature type="compositionally biased region" description="Polar residues" evidence="5">
    <location>
        <begin position="132"/>
        <end position="149"/>
    </location>
</feature>
<feature type="glycosylation site" description="N-linked (GlcNAc...) asparagine" evidence="3">
    <location>
        <position position="265"/>
    </location>
</feature>
<organism>
    <name type="scientific">Drosophila pseudoobscura pseudoobscura</name>
    <name type="common">Fruit fly</name>
    <dbReference type="NCBI Taxonomy" id="46245"/>
    <lineage>
        <taxon>Eukaryota</taxon>
        <taxon>Metazoa</taxon>
        <taxon>Ecdysozoa</taxon>
        <taxon>Arthropoda</taxon>
        <taxon>Hexapoda</taxon>
        <taxon>Insecta</taxon>
        <taxon>Pterygota</taxon>
        <taxon>Neoptera</taxon>
        <taxon>Endopterygota</taxon>
        <taxon>Diptera</taxon>
        <taxon>Brachycera</taxon>
        <taxon>Muscomorpha</taxon>
        <taxon>Ephydroidea</taxon>
        <taxon>Drosophilidae</taxon>
        <taxon>Drosophila</taxon>
        <taxon>Sophophora</taxon>
    </lineage>
</organism>
<proteinExistence type="inferred from homology"/>
<comment type="function">
    <text evidence="1">Rt/POMT1 and tw/POMT2 function as a protein O-mannosyltransferase in association with each other to generate and maintain normal muscle development.</text>
</comment>
<comment type="catalytic activity">
    <reaction evidence="6">
        <text>a di-trans,poly-cis-dolichyl beta-D-mannosyl phosphate + L-seryl-[protein] = 3-O-(alpha-D-mannosyl)-L-seryl-[protein] + a di-trans,poly-cis-dolichyl phosphate + H(+)</text>
        <dbReference type="Rhea" id="RHEA:17377"/>
        <dbReference type="Rhea" id="RHEA-COMP:9863"/>
        <dbReference type="Rhea" id="RHEA-COMP:13546"/>
        <dbReference type="Rhea" id="RHEA-COMP:19498"/>
        <dbReference type="Rhea" id="RHEA-COMP:19501"/>
        <dbReference type="ChEBI" id="CHEBI:15378"/>
        <dbReference type="ChEBI" id="CHEBI:29999"/>
        <dbReference type="ChEBI" id="CHEBI:57683"/>
        <dbReference type="ChEBI" id="CHEBI:58211"/>
        <dbReference type="ChEBI" id="CHEBI:137321"/>
        <dbReference type="EC" id="2.4.1.109"/>
    </reaction>
</comment>
<comment type="catalytic activity">
    <reaction evidence="6">
        <text>a di-trans,poly-cis-dolichyl beta-D-mannosyl phosphate + L-threonyl-[protein] = 3-O-(alpha-D-mannosyl)-L-threonyl-[protein] + a di-trans,poly-cis-dolichyl phosphate + H(+)</text>
        <dbReference type="Rhea" id="RHEA:53396"/>
        <dbReference type="Rhea" id="RHEA-COMP:11060"/>
        <dbReference type="Rhea" id="RHEA-COMP:13547"/>
        <dbReference type="Rhea" id="RHEA-COMP:19498"/>
        <dbReference type="Rhea" id="RHEA-COMP:19501"/>
        <dbReference type="ChEBI" id="CHEBI:15378"/>
        <dbReference type="ChEBI" id="CHEBI:30013"/>
        <dbReference type="ChEBI" id="CHEBI:57683"/>
        <dbReference type="ChEBI" id="CHEBI:58211"/>
        <dbReference type="ChEBI" id="CHEBI:137323"/>
        <dbReference type="EC" id="2.4.1.109"/>
    </reaction>
</comment>
<comment type="pathway">
    <text evidence="6">Protein modification; protein glycosylation.</text>
</comment>
<comment type="subunit">
    <text evidence="2">Interacts with tw/POMT2.</text>
</comment>
<comment type="subcellular location">
    <subcellularLocation>
        <location evidence="2">Endoplasmic reticulum membrane</location>
        <topology evidence="2">Multi-pass membrane protein</topology>
    </subcellularLocation>
</comment>
<comment type="similarity">
    <text evidence="3">Belongs to the glycosyltransferase 39 family.</text>
</comment>
<name>POMT1_DROPS</name>
<evidence type="ECO:0000250" key="1"/>
<evidence type="ECO:0000250" key="2">
    <source>
        <dbReference type="UniProtKB" id="Q9VTK2"/>
    </source>
</evidence>
<evidence type="ECO:0000255" key="3"/>
<evidence type="ECO:0000255" key="4">
    <source>
        <dbReference type="PROSITE-ProRule" id="PRU00131"/>
    </source>
</evidence>
<evidence type="ECO:0000256" key="5">
    <source>
        <dbReference type="SAM" id="MobiDB-lite"/>
    </source>
</evidence>
<evidence type="ECO:0000305" key="6"/>